<dbReference type="EMBL" id="AP009372">
    <property type="protein sequence ID" value="BAF50310.1"/>
    <property type="molecule type" value="Genomic_DNA"/>
</dbReference>
<dbReference type="EMBL" id="AP009372">
    <property type="protein sequence ID" value="BAF50333.1"/>
    <property type="molecule type" value="Genomic_DNA"/>
</dbReference>
<dbReference type="SMR" id="A4QKV5"/>
<dbReference type="GO" id="GO:0009507">
    <property type="term" value="C:chloroplast"/>
    <property type="evidence" value="ECO:0007669"/>
    <property type="project" value="UniProtKB-SubCell"/>
</dbReference>
<dbReference type="GO" id="GO:0015935">
    <property type="term" value="C:small ribosomal subunit"/>
    <property type="evidence" value="ECO:0007669"/>
    <property type="project" value="InterPro"/>
</dbReference>
<dbReference type="GO" id="GO:0019843">
    <property type="term" value="F:rRNA binding"/>
    <property type="evidence" value="ECO:0007669"/>
    <property type="project" value="UniProtKB-UniRule"/>
</dbReference>
<dbReference type="GO" id="GO:0003735">
    <property type="term" value="F:structural constituent of ribosome"/>
    <property type="evidence" value="ECO:0007669"/>
    <property type="project" value="InterPro"/>
</dbReference>
<dbReference type="GO" id="GO:0006412">
    <property type="term" value="P:translation"/>
    <property type="evidence" value="ECO:0007669"/>
    <property type="project" value="UniProtKB-UniRule"/>
</dbReference>
<dbReference type="CDD" id="cd03368">
    <property type="entry name" value="Ribosomal_S12"/>
    <property type="match status" value="1"/>
</dbReference>
<dbReference type="FunFam" id="2.40.50.140:FF:000008">
    <property type="entry name" value="30S ribosomal protein S12, chloroplastic"/>
    <property type="match status" value="1"/>
</dbReference>
<dbReference type="Gene3D" id="2.40.50.140">
    <property type="entry name" value="Nucleic acid-binding proteins"/>
    <property type="match status" value="1"/>
</dbReference>
<dbReference type="HAMAP" id="MF_00403_B">
    <property type="entry name" value="Ribosomal_uS12_B"/>
    <property type="match status" value="1"/>
</dbReference>
<dbReference type="InterPro" id="IPR012340">
    <property type="entry name" value="NA-bd_OB-fold"/>
</dbReference>
<dbReference type="InterPro" id="IPR006032">
    <property type="entry name" value="Ribosomal_uS12"/>
</dbReference>
<dbReference type="InterPro" id="IPR005679">
    <property type="entry name" value="Ribosomal_uS12_bac"/>
</dbReference>
<dbReference type="NCBIfam" id="TIGR00981">
    <property type="entry name" value="rpsL_bact"/>
    <property type="match status" value="1"/>
</dbReference>
<dbReference type="PANTHER" id="PTHR11652">
    <property type="entry name" value="30S RIBOSOMAL PROTEIN S12 FAMILY MEMBER"/>
    <property type="match status" value="1"/>
</dbReference>
<dbReference type="Pfam" id="PF00164">
    <property type="entry name" value="Ribosom_S12_S23"/>
    <property type="match status" value="1"/>
</dbReference>
<dbReference type="PIRSF" id="PIRSF002133">
    <property type="entry name" value="Ribosomal_S12/S23"/>
    <property type="match status" value="1"/>
</dbReference>
<dbReference type="PRINTS" id="PR01034">
    <property type="entry name" value="RIBOSOMALS12"/>
</dbReference>
<dbReference type="SUPFAM" id="SSF50249">
    <property type="entry name" value="Nucleic acid-binding proteins"/>
    <property type="match status" value="1"/>
</dbReference>
<dbReference type="PROSITE" id="PS00055">
    <property type="entry name" value="RIBOSOMAL_S12"/>
    <property type="match status" value="1"/>
</dbReference>
<reference key="1">
    <citation type="submission" date="2007-03" db="EMBL/GenBank/DDBJ databases">
        <title>Sequencing analysis of Crucihimalaya wallichii chloroplast DNA.</title>
        <authorList>
            <person name="Hosouchi T."/>
            <person name="Tsuruoka H."/>
            <person name="Kotani H."/>
        </authorList>
    </citation>
    <scope>NUCLEOTIDE SEQUENCE [LARGE SCALE GENOMIC DNA]</scope>
</reference>
<evidence type="ECO:0000250" key="1"/>
<evidence type="ECO:0000255" key="2">
    <source>
        <dbReference type="HAMAP-Rule" id="MF_00403"/>
    </source>
</evidence>
<evidence type="ECO:0000305" key="3"/>
<geneLocation type="chloroplast"/>
<keyword id="KW-0150">Chloroplast</keyword>
<keyword id="KW-0934">Plastid</keyword>
<keyword id="KW-0687">Ribonucleoprotein</keyword>
<keyword id="KW-0689">Ribosomal protein</keyword>
<keyword id="KW-0694">RNA-binding</keyword>
<keyword id="KW-0699">rRNA-binding</keyword>
<name>RR12_CRUWA</name>
<organism>
    <name type="scientific">Crucihimalaya wallichii</name>
    <name type="common">Rock-cress</name>
    <name type="synonym">Arabidopsis campestris</name>
    <dbReference type="NCBI Taxonomy" id="78192"/>
    <lineage>
        <taxon>Eukaryota</taxon>
        <taxon>Viridiplantae</taxon>
        <taxon>Streptophyta</taxon>
        <taxon>Embryophyta</taxon>
        <taxon>Tracheophyta</taxon>
        <taxon>Spermatophyta</taxon>
        <taxon>Magnoliopsida</taxon>
        <taxon>eudicotyledons</taxon>
        <taxon>Gunneridae</taxon>
        <taxon>Pentapetalae</taxon>
        <taxon>rosids</taxon>
        <taxon>malvids</taxon>
        <taxon>Brassicales</taxon>
        <taxon>Brassicaceae</taxon>
        <taxon>Crucihimalayeae</taxon>
        <taxon>Crucihimalaya</taxon>
    </lineage>
</organism>
<protein>
    <recommendedName>
        <fullName evidence="2">Small ribosomal subunit protein uS12cz/uS12cy</fullName>
    </recommendedName>
    <alternativeName>
        <fullName evidence="3">30S ribosomal protein S12, chloroplastic</fullName>
    </alternativeName>
</protein>
<sequence length="123" mass="13764">MPTIKQLIRNTRQPIRNVTKSPALRGCPQRRGTCTRVYTITPKKPNSALRKVARVRLTSGFEITAYIPGIGHNLQEHSVVLVRGGRVKDLPGVRYHIVRGTLDAVGVKDRQQGRSKYGVKKPK</sequence>
<comment type="function">
    <text evidence="1">With S4 and S5 plays an important role in translational accuracy. Located at the interface of the 30S and 50S subunits (By similarity).</text>
</comment>
<comment type="subunit">
    <text evidence="1">Part of the 30S ribosomal subunit.</text>
</comment>
<comment type="subcellular location">
    <subcellularLocation>
        <location>Plastid</location>
        <location>Chloroplast</location>
    </subcellularLocation>
</comment>
<comment type="similarity">
    <text evidence="3">Belongs to the universal ribosomal protein uS12 family.</text>
</comment>
<feature type="chain" id="PRO_0000296066" description="Small ribosomal subunit protein uS12cz/uS12cy">
    <location>
        <begin position="1"/>
        <end position="123"/>
    </location>
</feature>
<accession>A4QKV5</accession>
<gene>
    <name type="primary">rps12-A</name>
</gene>
<gene>
    <name type="primary">rps12-B</name>
</gene>
<proteinExistence type="inferred from homology"/>